<organism>
    <name type="scientific">Ectopseudomonas mendocina (strain ymp)</name>
    <name type="common">Pseudomonas mendocina</name>
    <dbReference type="NCBI Taxonomy" id="399739"/>
    <lineage>
        <taxon>Bacteria</taxon>
        <taxon>Pseudomonadati</taxon>
        <taxon>Pseudomonadota</taxon>
        <taxon>Gammaproteobacteria</taxon>
        <taxon>Pseudomonadales</taxon>
        <taxon>Pseudomonadaceae</taxon>
        <taxon>Ectopseudomonas</taxon>
    </lineage>
</organism>
<gene>
    <name type="ordered locus">Pmen_0939</name>
</gene>
<sequence>MPSFDVVSELDKHELTNAVDNAIKELDRRFDLRGKCSIESKDKTLTLTAEAEFMLEQMLDIVRSSLIKRKIDCQCMEAKDPYASGKVMKQEVTFREGIDKELAKKIVAHIKDAKLKVQAAIQGEQVRVTGKKRDDLQEAIALLRGHEFGMPLQYNNFRD</sequence>
<feature type="chain" id="PRO_1000061403" description="Nucleotide-binding protein Pmen_0939">
    <location>
        <begin position="1"/>
        <end position="159"/>
    </location>
</feature>
<comment type="function">
    <text evidence="1">Nucleotide-binding protein.</text>
</comment>
<comment type="similarity">
    <text evidence="1">Belongs to the YajQ family.</text>
</comment>
<proteinExistence type="inferred from homology"/>
<name>Y939_ECTM1</name>
<reference key="1">
    <citation type="submission" date="2007-04" db="EMBL/GenBank/DDBJ databases">
        <title>Complete sequence of Pseudomonas mendocina ymp.</title>
        <authorList>
            <consortium name="US DOE Joint Genome Institute"/>
            <person name="Copeland A."/>
            <person name="Lucas S."/>
            <person name="Lapidus A."/>
            <person name="Barry K."/>
            <person name="Glavina del Rio T."/>
            <person name="Dalin E."/>
            <person name="Tice H."/>
            <person name="Pitluck S."/>
            <person name="Kiss H."/>
            <person name="Brettin T."/>
            <person name="Detter J.C."/>
            <person name="Bruce D."/>
            <person name="Han C."/>
            <person name="Schmutz J."/>
            <person name="Larimer F."/>
            <person name="Land M."/>
            <person name="Hauser L."/>
            <person name="Kyrpides N."/>
            <person name="Mikhailova N."/>
            <person name="Hersman L."/>
            <person name="Dubois J."/>
            <person name="Maurice P."/>
            <person name="Richardson P."/>
        </authorList>
    </citation>
    <scope>NUCLEOTIDE SEQUENCE [LARGE SCALE GENOMIC DNA]</scope>
    <source>
        <strain>ymp</strain>
    </source>
</reference>
<accession>A4XQU1</accession>
<protein>
    <recommendedName>
        <fullName evidence="1">Nucleotide-binding protein Pmen_0939</fullName>
    </recommendedName>
</protein>
<dbReference type="EMBL" id="CP000680">
    <property type="protein sequence ID" value="ABP83707.1"/>
    <property type="molecule type" value="Genomic_DNA"/>
</dbReference>
<dbReference type="SMR" id="A4XQU1"/>
<dbReference type="STRING" id="399739.Pmen_0939"/>
<dbReference type="KEGG" id="pmy:Pmen_0939"/>
<dbReference type="PATRIC" id="fig|399739.8.peg.948"/>
<dbReference type="eggNOG" id="COG1666">
    <property type="taxonomic scope" value="Bacteria"/>
</dbReference>
<dbReference type="HOGENOM" id="CLU_099839_1_0_6"/>
<dbReference type="OrthoDB" id="9801447at2"/>
<dbReference type="GO" id="GO:0005829">
    <property type="term" value="C:cytosol"/>
    <property type="evidence" value="ECO:0007669"/>
    <property type="project" value="TreeGrafter"/>
</dbReference>
<dbReference type="GO" id="GO:0000166">
    <property type="term" value="F:nucleotide binding"/>
    <property type="evidence" value="ECO:0007669"/>
    <property type="project" value="TreeGrafter"/>
</dbReference>
<dbReference type="CDD" id="cd11740">
    <property type="entry name" value="YajQ_like"/>
    <property type="match status" value="1"/>
</dbReference>
<dbReference type="FunFam" id="3.30.70.860:FF:000001">
    <property type="entry name" value="UPF0234 protein YajQ"/>
    <property type="match status" value="1"/>
</dbReference>
<dbReference type="Gene3D" id="3.30.70.860">
    <property type="match status" value="1"/>
</dbReference>
<dbReference type="Gene3D" id="3.30.70.990">
    <property type="entry name" value="YajQ-like, domain 2"/>
    <property type="match status" value="1"/>
</dbReference>
<dbReference type="HAMAP" id="MF_00632">
    <property type="entry name" value="YajQ"/>
    <property type="match status" value="1"/>
</dbReference>
<dbReference type="InterPro" id="IPR007551">
    <property type="entry name" value="DUF520"/>
</dbReference>
<dbReference type="InterPro" id="IPR035571">
    <property type="entry name" value="UPF0234-like_C"/>
</dbReference>
<dbReference type="InterPro" id="IPR035570">
    <property type="entry name" value="UPF0234_N"/>
</dbReference>
<dbReference type="InterPro" id="IPR036183">
    <property type="entry name" value="YajQ-like_sf"/>
</dbReference>
<dbReference type="NCBIfam" id="NF003819">
    <property type="entry name" value="PRK05412.1"/>
    <property type="match status" value="1"/>
</dbReference>
<dbReference type="PANTHER" id="PTHR30476">
    <property type="entry name" value="UPF0234 PROTEIN YAJQ"/>
    <property type="match status" value="1"/>
</dbReference>
<dbReference type="PANTHER" id="PTHR30476:SF0">
    <property type="entry name" value="UPF0234 PROTEIN YAJQ"/>
    <property type="match status" value="1"/>
</dbReference>
<dbReference type="Pfam" id="PF04461">
    <property type="entry name" value="DUF520"/>
    <property type="match status" value="1"/>
</dbReference>
<dbReference type="SUPFAM" id="SSF89963">
    <property type="entry name" value="YajQ-like"/>
    <property type="match status" value="2"/>
</dbReference>
<evidence type="ECO:0000255" key="1">
    <source>
        <dbReference type="HAMAP-Rule" id="MF_00632"/>
    </source>
</evidence>
<keyword id="KW-0547">Nucleotide-binding</keyword>